<feature type="chain" id="PRO_0000304277" description="Porphobilinogen deaminase">
    <location>
        <begin position="1"/>
        <end position="308"/>
    </location>
</feature>
<feature type="modified residue" description="S-(dipyrrolylmethanemethyl)cysteine" evidence="1">
    <location>
        <position position="241"/>
    </location>
</feature>
<keyword id="KW-0627">Porphyrin biosynthesis</keyword>
<keyword id="KW-0808">Transferase</keyword>
<name>HEM3_STAA3</name>
<comment type="function">
    <text evidence="1">Tetrapolymerization of the monopyrrole PBG into the hydroxymethylbilane pre-uroporphyrinogen in several discrete steps.</text>
</comment>
<comment type="catalytic activity">
    <reaction evidence="1">
        <text>4 porphobilinogen + H2O = hydroxymethylbilane + 4 NH4(+)</text>
        <dbReference type="Rhea" id="RHEA:13185"/>
        <dbReference type="ChEBI" id="CHEBI:15377"/>
        <dbReference type="ChEBI" id="CHEBI:28938"/>
        <dbReference type="ChEBI" id="CHEBI:57845"/>
        <dbReference type="ChEBI" id="CHEBI:58126"/>
        <dbReference type="EC" id="2.5.1.61"/>
    </reaction>
</comment>
<comment type="cofactor">
    <cofactor evidence="1">
        <name>dipyrromethane</name>
        <dbReference type="ChEBI" id="CHEBI:60342"/>
    </cofactor>
    <text evidence="1">Binds 1 dipyrromethane group covalently.</text>
</comment>
<comment type="pathway">
    <text evidence="1">Porphyrin-containing compound metabolism; protoporphyrin-IX biosynthesis; coproporphyrinogen-III from 5-aminolevulinate: step 2/4.</text>
</comment>
<comment type="subunit">
    <text evidence="1">Monomer.</text>
</comment>
<comment type="miscellaneous">
    <text evidence="1">The porphobilinogen subunits are added to the dipyrromethane group.</text>
</comment>
<comment type="similarity">
    <text evidence="1">Belongs to the HMBS family.</text>
</comment>
<reference key="1">
    <citation type="journal article" date="2006" name="Lancet">
        <title>Complete genome sequence of USA300, an epidemic clone of community-acquired meticillin-resistant Staphylococcus aureus.</title>
        <authorList>
            <person name="Diep B.A."/>
            <person name="Gill S.R."/>
            <person name="Chang R.F."/>
            <person name="Phan T.H."/>
            <person name="Chen J.H."/>
            <person name="Davidson M.G."/>
            <person name="Lin F."/>
            <person name="Lin J."/>
            <person name="Carleton H.A."/>
            <person name="Mongodin E.F."/>
            <person name="Sensabaugh G.F."/>
            <person name="Perdreau-Remington F."/>
        </authorList>
    </citation>
    <scope>NUCLEOTIDE SEQUENCE [LARGE SCALE GENOMIC DNA]</scope>
    <source>
        <strain>USA300</strain>
    </source>
</reference>
<accession>Q2FG66</accession>
<evidence type="ECO:0000255" key="1">
    <source>
        <dbReference type="HAMAP-Rule" id="MF_00260"/>
    </source>
</evidence>
<gene>
    <name evidence="1" type="primary">hemC</name>
    <name type="ordered locus">SAUSA300_1617</name>
</gene>
<protein>
    <recommendedName>
        <fullName evidence="1">Porphobilinogen deaminase</fullName>
        <shortName evidence="1">PBG</shortName>
        <ecNumber evidence="1">2.5.1.61</ecNumber>
    </recommendedName>
    <alternativeName>
        <fullName evidence="1">Hydroxymethylbilane synthase</fullName>
        <shortName evidence="1">HMBS</shortName>
    </alternativeName>
    <alternativeName>
        <fullName evidence="1">Pre-uroporphyrinogen synthase</fullName>
    </alternativeName>
</protein>
<organism>
    <name type="scientific">Staphylococcus aureus (strain USA300)</name>
    <dbReference type="NCBI Taxonomy" id="367830"/>
    <lineage>
        <taxon>Bacteria</taxon>
        <taxon>Bacillati</taxon>
        <taxon>Bacillota</taxon>
        <taxon>Bacilli</taxon>
        <taxon>Bacillales</taxon>
        <taxon>Staphylococcaceae</taxon>
        <taxon>Staphylococcus</taxon>
    </lineage>
</organism>
<sequence>MRKLVVGSRRSKLALTQSQQFIDKLKAVEPNLEIEIKEIVTKGDRIVDKQLSKVGGKGLFVKEIQHELFEKNIDMAIHSLKDVPSVIPEGLTLGCIPDRELPFDAYISKTHTPLSQLPEGSIIGTSSLRRGAQILSKYPNLEIKWIRGNIDTRLEKLQTEDYDAIILAAAGLRRMGWSDDIVTSYLDRDTLLPAIGQGALGIECRSDDEELLTLLSKVHNDEVAKCVTAERTFLAEMDGSCQVPIAGYATISDQNEIEFTGLIMTPDGKERFEYTMNGTDPVELGKTVSNKLKEQGAYEIIKRLNEQH</sequence>
<proteinExistence type="inferred from homology"/>
<dbReference type="EC" id="2.5.1.61" evidence="1"/>
<dbReference type="EMBL" id="CP000255">
    <property type="protein sequence ID" value="ABD20810.1"/>
    <property type="molecule type" value="Genomic_DNA"/>
</dbReference>
<dbReference type="RefSeq" id="WP_001230228.1">
    <property type="nucleotide sequence ID" value="NZ_CP027476.1"/>
</dbReference>
<dbReference type="SMR" id="Q2FG66"/>
<dbReference type="KEGG" id="saa:SAUSA300_1617"/>
<dbReference type="HOGENOM" id="CLU_019704_0_2_9"/>
<dbReference type="OMA" id="LWQANHI"/>
<dbReference type="UniPathway" id="UPA00251">
    <property type="reaction ID" value="UER00319"/>
</dbReference>
<dbReference type="Proteomes" id="UP000001939">
    <property type="component" value="Chromosome"/>
</dbReference>
<dbReference type="GO" id="GO:0005737">
    <property type="term" value="C:cytoplasm"/>
    <property type="evidence" value="ECO:0007669"/>
    <property type="project" value="TreeGrafter"/>
</dbReference>
<dbReference type="GO" id="GO:0004418">
    <property type="term" value="F:hydroxymethylbilane synthase activity"/>
    <property type="evidence" value="ECO:0007669"/>
    <property type="project" value="UniProtKB-UniRule"/>
</dbReference>
<dbReference type="GO" id="GO:0006782">
    <property type="term" value="P:protoporphyrinogen IX biosynthetic process"/>
    <property type="evidence" value="ECO:0007669"/>
    <property type="project" value="UniProtKB-UniRule"/>
</dbReference>
<dbReference type="CDD" id="cd13646">
    <property type="entry name" value="PBP2_EcHMBS_like"/>
    <property type="match status" value="1"/>
</dbReference>
<dbReference type="FunFam" id="3.30.160.40:FF:000001">
    <property type="entry name" value="Porphobilinogen deaminase"/>
    <property type="match status" value="1"/>
</dbReference>
<dbReference type="FunFam" id="3.40.190.10:FF:000004">
    <property type="entry name" value="Porphobilinogen deaminase"/>
    <property type="match status" value="1"/>
</dbReference>
<dbReference type="FunFam" id="3.40.190.10:FF:000005">
    <property type="entry name" value="Porphobilinogen deaminase"/>
    <property type="match status" value="1"/>
</dbReference>
<dbReference type="Gene3D" id="3.40.190.10">
    <property type="entry name" value="Periplasmic binding protein-like II"/>
    <property type="match status" value="2"/>
</dbReference>
<dbReference type="Gene3D" id="3.30.160.40">
    <property type="entry name" value="Porphobilinogen deaminase, C-terminal domain"/>
    <property type="match status" value="1"/>
</dbReference>
<dbReference type="HAMAP" id="MF_00260">
    <property type="entry name" value="Porphobil_deam"/>
    <property type="match status" value="1"/>
</dbReference>
<dbReference type="InterPro" id="IPR000860">
    <property type="entry name" value="HemC"/>
</dbReference>
<dbReference type="InterPro" id="IPR022419">
    <property type="entry name" value="Porphobilin_deaminase_cofac_BS"/>
</dbReference>
<dbReference type="InterPro" id="IPR022417">
    <property type="entry name" value="Porphobilin_deaminase_N"/>
</dbReference>
<dbReference type="InterPro" id="IPR022418">
    <property type="entry name" value="Porphobilinogen_deaminase_C"/>
</dbReference>
<dbReference type="InterPro" id="IPR036803">
    <property type="entry name" value="Porphobilinogen_deaminase_C_sf"/>
</dbReference>
<dbReference type="NCBIfam" id="TIGR00212">
    <property type="entry name" value="hemC"/>
    <property type="match status" value="1"/>
</dbReference>
<dbReference type="PANTHER" id="PTHR11557">
    <property type="entry name" value="PORPHOBILINOGEN DEAMINASE"/>
    <property type="match status" value="1"/>
</dbReference>
<dbReference type="PANTHER" id="PTHR11557:SF0">
    <property type="entry name" value="PORPHOBILINOGEN DEAMINASE"/>
    <property type="match status" value="1"/>
</dbReference>
<dbReference type="Pfam" id="PF01379">
    <property type="entry name" value="Porphobil_deam"/>
    <property type="match status" value="1"/>
</dbReference>
<dbReference type="Pfam" id="PF03900">
    <property type="entry name" value="Porphobil_deamC"/>
    <property type="match status" value="1"/>
</dbReference>
<dbReference type="PIRSF" id="PIRSF001438">
    <property type="entry name" value="4pyrrol_synth_OHMeBilane_synth"/>
    <property type="match status" value="1"/>
</dbReference>
<dbReference type="PRINTS" id="PR00151">
    <property type="entry name" value="PORPHBDMNASE"/>
</dbReference>
<dbReference type="SUPFAM" id="SSF53850">
    <property type="entry name" value="Periplasmic binding protein-like II"/>
    <property type="match status" value="1"/>
</dbReference>
<dbReference type="SUPFAM" id="SSF54782">
    <property type="entry name" value="Porphobilinogen deaminase (hydroxymethylbilane synthase), C-terminal domain"/>
    <property type="match status" value="1"/>
</dbReference>
<dbReference type="PROSITE" id="PS00533">
    <property type="entry name" value="PORPHOBILINOGEN_DEAM"/>
    <property type="match status" value="1"/>
</dbReference>